<organism>
    <name type="scientific">Thermotoga maritima (strain ATCC 43589 / DSM 3109 / JCM 10099 / NBRC 100826 / MSB8)</name>
    <dbReference type="NCBI Taxonomy" id="243274"/>
    <lineage>
        <taxon>Bacteria</taxon>
        <taxon>Thermotogati</taxon>
        <taxon>Thermotogota</taxon>
        <taxon>Thermotogae</taxon>
        <taxon>Thermotogales</taxon>
        <taxon>Thermotogaceae</taxon>
        <taxon>Thermotoga</taxon>
    </lineage>
</organism>
<evidence type="ECO:0000250" key="1">
    <source>
        <dbReference type="UniProtKB" id="O58389"/>
    </source>
</evidence>
<evidence type="ECO:0000269" key="2">
    <source>
    </source>
</evidence>
<evidence type="ECO:0000303" key="3">
    <source>
    </source>
</evidence>
<evidence type="ECO:0000305" key="4"/>
<evidence type="ECO:0000305" key="5">
    <source>
    </source>
</evidence>
<evidence type="ECO:0000305" key="6">
    <source ref="3"/>
</evidence>
<evidence type="ECO:0000312" key="7">
    <source>
        <dbReference type="EMBL" id="AAD35497.1"/>
    </source>
</evidence>
<evidence type="ECO:0007744" key="8">
    <source>
        <dbReference type="PDB" id="3IP1"/>
    </source>
</evidence>
<evidence type="ECO:0007829" key="9">
    <source>
        <dbReference type="PDB" id="3IP1"/>
    </source>
</evidence>
<keyword id="KW-0002">3D-structure</keyword>
<keyword id="KW-0479">Metal-binding</keyword>
<keyword id="KW-0520">NAD</keyword>
<keyword id="KW-0560">Oxidoreductase</keyword>
<keyword id="KW-1185">Reference proteome</keyword>
<keyword id="KW-0862">Zinc</keyword>
<reference key="1">
    <citation type="journal article" date="1999" name="Nature">
        <title>Evidence for lateral gene transfer between Archaea and Bacteria from genome sequence of Thermotoga maritima.</title>
        <authorList>
            <person name="Nelson K.E."/>
            <person name="Clayton R.A."/>
            <person name="Gill S.R."/>
            <person name="Gwinn M.L."/>
            <person name="Dodson R.J."/>
            <person name="Haft D.H."/>
            <person name="Hickey E.K."/>
            <person name="Peterson J.D."/>
            <person name="Nelson W.C."/>
            <person name="Ketchum K.A."/>
            <person name="McDonald L.A."/>
            <person name="Utterback T.R."/>
            <person name="Malek J.A."/>
            <person name="Linher K.D."/>
            <person name="Garrett M.M."/>
            <person name="Stewart A.M."/>
            <person name="Cotton M.D."/>
            <person name="Pratt M.S."/>
            <person name="Phillips C.A."/>
            <person name="Richardson D.L."/>
            <person name="Heidelberg J.F."/>
            <person name="Sutton G.G."/>
            <person name="Fleischmann R.D."/>
            <person name="Eisen J.A."/>
            <person name="White O."/>
            <person name="Salzberg S.L."/>
            <person name="Smith H.O."/>
            <person name="Venter J.C."/>
            <person name="Fraser C.M."/>
        </authorList>
    </citation>
    <scope>NUCLEOTIDE SEQUENCE [LARGE SCALE GENOMIC DNA]</scope>
    <source>
        <strain>ATCC 43589 / DSM 3109 / JCM 10099 / NBRC 100826 / MSB8</strain>
    </source>
</reference>
<reference key="2">
    <citation type="journal article" date="2013" name="Environ. Microbiol.">
        <title>Novel inositol catabolic pathway in Thermotoga maritima.</title>
        <authorList>
            <person name="Rodionova I.A."/>
            <person name="Leyn S.A."/>
            <person name="Burkart M.D."/>
            <person name="Boucher N."/>
            <person name="Noll K.M."/>
            <person name="Osterman A.L."/>
            <person name="Rodionov D.A."/>
        </authorList>
    </citation>
    <scope>FUNCTION</scope>
    <scope>CATALYTIC ACTIVITY</scope>
    <scope>BIOPHYSICOCHEMICAL PROPERTIES</scope>
    <scope>SUBSTRATE SPECIFICITY</scope>
    <scope>PATHWAY</scope>
    <scope>SUBUNIT</scope>
</reference>
<reference key="3">
    <citation type="submission" date="2009-08" db="PDB data bank">
        <title>Structure of putative alcohol dehydrogenase (TM_042) from Thermotoga maritima.</title>
        <authorList>
            <person name="Ramagopal U.A."/>
            <person name="Toro R."/>
            <person name="Burley S.K."/>
            <person name="Almo S.C."/>
        </authorList>
    </citation>
    <scope>X-RAY CRYSTALLOGRAPHY (2.09 ANGSTROMS) IN COMPLEX WITH CADMIUM IONS</scope>
    <scope>COFACTOR</scope>
</reference>
<name>IOLM_THEMA</name>
<proteinExistence type="evidence at protein level"/>
<protein>
    <recommendedName>
        <fullName evidence="5">Scyllo-inosose 3-dehydrogenase</fullName>
        <ecNumber evidence="2">1.1.1.-</ecNumber>
    </recommendedName>
    <alternativeName>
        <fullName evidence="3">2-keto-myo-inositol dehydrogenase</fullName>
    </alternativeName>
</protein>
<sequence length="395" mass="43317">MRAVRLHAKWDPRPEFKLGPKDIEGKLTWLGSKVWRYPEVRVEEVPEPRIEKPTEIIIKVKACGICGSDVHMAQTDEEGYILYPGLTGFPVTLGHEFSGVVVEAGPEAINRRTNKRFEIGEPVCAEEMLWCGHCRPCAEGFPNHCENLNELGFNVDGAFAEYVKVDAKYAWSLRELEGVYEGDRLFLAGSLVEPTSVAYNAVIVRGGGIRPGDNVVILGGGPIGLAAVAILKHAGASKVILSEPSEVRRNLAKELGADHVIDPTKENFVEAVLDYTNGLGAKLFLEATGVPQLVWPQIEEVIWRARGINATVAIVARADAKIPLTGEVFQVRRAQIVGSQGHSGHGTFPRVISLMASGMDMTKIISKTVSMEEIPEYIKRLQTDKSLVKVTMLNE</sequence>
<accession>Q9WYP3</accession>
<accession>G4FHX1</accession>
<comment type="function">
    <text evidence="2">Catalyzes the NAD(+)-dependent oxidation of scyllo-inosose (2-keto-myo-inositol) to 3-dehydro-scyllo-inosose (diketo-inositol), and thus probably functions in a myo-inositol degradation pathway together with IolG, IolN and IolO. Has no activity on myo-inositol, D-chiro-inositol and 1-keto-D-chiro-inositol.</text>
</comment>
<comment type="catalytic activity">
    <reaction evidence="2">
        <text>scyllo-inosose + NAD(+) = 3-dehydro-scyllo-inosose + NADH + H(+)</text>
        <dbReference type="Rhea" id="RHEA:53284"/>
        <dbReference type="ChEBI" id="CHEBI:15378"/>
        <dbReference type="ChEBI" id="CHEBI:17811"/>
        <dbReference type="ChEBI" id="CHEBI:57540"/>
        <dbReference type="ChEBI" id="CHEBI:57945"/>
        <dbReference type="ChEBI" id="CHEBI:137015"/>
    </reaction>
</comment>
<comment type="cofactor">
    <cofactor evidence="6">
        <name>Zn(2+)</name>
        <dbReference type="ChEBI" id="CHEBI:29105"/>
    </cofactor>
    <text evidence="6">Binds 2 Zn(2+) ions per subunit.</text>
</comment>
<comment type="biophysicochemical properties">
    <kinetics>
        <KM evidence="2">0.7 mM for scyllo-inosose</KM>
        <KM evidence="2">0.14 mM for NAD(+)</KM>
        <text evidence="2">kcat is 1 sec(-1).</text>
    </kinetics>
</comment>
<comment type="pathway">
    <text evidence="5">Polyol metabolism; myo-inositol metabolism.</text>
</comment>
<comment type="subunit">
    <text evidence="2">Homodimer.</text>
</comment>
<comment type="similarity">
    <text evidence="4">Belongs to the zinc-containing alcohol dehydrogenase family.</text>
</comment>
<feature type="chain" id="PRO_0000440855" description="Scyllo-inosose 3-dehydrogenase">
    <location>
        <begin position="1"/>
        <end position="395"/>
    </location>
</feature>
<feature type="active site" description="Charge relay system" evidence="1">
    <location>
        <position position="68"/>
    </location>
</feature>
<feature type="active site" description="Charge relay system" evidence="1">
    <location>
        <position position="71"/>
    </location>
</feature>
<feature type="binding site" evidence="6 8">
    <location>
        <position position="66"/>
    </location>
    <ligand>
        <name>Zn(2+)</name>
        <dbReference type="ChEBI" id="CHEBI:29105"/>
        <label>1</label>
    </ligand>
</feature>
<feature type="binding site" evidence="6 8">
    <location>
        <position position="95"/>
    </location>
    <ligand>
        <name>Zn(2+)</name>
        <dbReference type="ChEBI" id="CHEBI:29105"/>
        <label>1</label>
    </ligand>
</feature>
<feature type="binding site" evidence="6 8">
    <location>
        <position position="96"/>
    </location>
    <ligand>
        <name>Zn(2+)</name>
        <dbReference type="ChEBI" id="CHEBI:29105"/>
        <label>1</label>
    </ligand>
</feature>
<feature type="binding site" evidence="6 8">
    <location>
        <position position="131"/>
    </location>
    <ligand>
        <name>Zn(2+)</name>
        <dbReference type="ChEBI" id="CHEBI:29105"/>
        <label>2</label>
    </ligand>
</feature>
<feature type="binding site" evidence="6 8">
    <location>
        <position position="134"/>
    </location>
    <ligand>
        <name>Zn(2+)</name>
        <dbReference type="ChEBI" id="CHEBI:29105"/>
        <label>2</label>
    </ligand>
</feature>
<feature type="binding site" evidence="6 8">
    <location>
        <position position="137"/>
    </location>
    <ligand>
        <name>Zn(2+)</name>
        <dbReference type="ChEBI" id="CHEBI:29105"/>
        <label>2</label>
    </ligand>
</feature>
<feature type="binding site" evidence="6 8">
    <location>
        <position position="145"/>
    </location>
    <ligand>
        <name>Zn(2+)</name>
        <dbReference type="ChEBI" id="CHEBI:29105"/>
        <label>2</label>
    </ligand>
</feature>
<feature type="binding site" evidence="6 8">
    <location>
        <position position="193"/>
    </location>
    <ligand>
        <name>Zn(2+)</name>
        <dbReference type="ChEBI" id="CHEBI:29105"/>
        <label>1</label>
    </ligand>
</feature>
<feature type="binding site" evidence="1">
    <location>
        <position position="223"/>
    </location>
    <ligand>
        <name>NAD(+)</name>
        <dbReference type="ChEBI" id="CHEBI:57540"/>
    </ligand>
</feature>
<feature type="binding site" evidence="1">
    <location>
        <position position="243"/>
    </location>
    <ligand>
        <name>NAD(+)</name>
        <dbReference type="ChEBI" id="CHEBI:57540"/>
    </ligand>
</feature>
<feature type="binding site" evidence="1">
    <location>
        <position position="248"/>
    </location>
    <ligand>
        <name>NAD(+)</name>
        <dbReference type="ChEBI" id="CHEBI:57540"/>
    </ligand>
</feature>
<feature type="strand" evidence="9">
    <location>
        <begin position="2"/>
        <end position="10"/>
    </location>
</feature>
<feature type="turn" evidence="9">
    <location>
        <begin position="24"/>
        <end position="26"/>
    </location>
</feature>
<feature type="strand" evidence="9">
    <location>
        <begin position="27"/>
        <end position="29"/>
    </location>
</feature>
<feature type="helix" evidence="9">
    <location>
        <begin position="31"/>
        <end position="33"/>
    </location>
</feature>
<feature type="strand" evidence="9">
    <location>
        <begin position="35"/>
        <end position="45"/>
    </location>
</feature>
<feature type="strand" evidence="9">
    <location>
        <begin position="55"/>
        <end position="64"/>
    </location>
</feature>
<feature type="helix" evidence="9">
    <location>
        <begin position="67"/>
        <end position="73"/>
    </location>
</feature>
<feature type="strand" evidence="9">
    <location>
        <begin position="79"/>
        <end position="82"/>
    </location>
</feature>
<feature type="strand" evidence="9">
    <location>
        <begin position="89"/>
        <end position="92"/>
    </location>
</feature>
<feature type="strand" evidence="9">
    <location>
        <begin position="96"/>
        <end position="104"/>
    </location>
</feature>
<feature type="turn" evidence="9">
    <location>
        <begin position="111"/>
        <end position="113"/>
    </location>
</feature>
<feature type="strand" evidence="9">
    <location>
        <begin position="114"/>
        <end position="116"/>
    </location>
</feature>
<feature type="strand" evidence="9">
    <location>
        <begin position="122"/>
        <end position="125"/>
    </location>
</feature>
<feature type="strand" evidence="9">
    <location>
        <begin position="127"/>
        <end position="129"/>
    </location>
</feature>
<feature type="helix" evidence="9">
    <location>
        <begin position="135"/>
        <end position="138"/>
    </location>
</feature>
<feature type="helix" evidence="9">
    <location>
        <begin position="142"/>
        <end position="144"/>
    </location>
</feature>
<feature type="turn" evidence="9">
    <location>
        <begin position="151"/>
        <end position="153"/>
    </location>
</feature>
<feature type="strand" evidence="9">
    <location>
        <begin position="158"/>
        <end position="166"/>
    </location>
</feature>
<feature type="helix" evidence="9">
    <location>
        <begin position="167"/>
        <end position="169"/>
    </location>
</feature>
<feature type="strand" evidence="9">
    <location>
        <begin position="170"/>
        <end position="172"/>
    </location>
</feature>
<feature type="helix" evidence="9">
    <location>
        <begin position="174"/>
        <end position="176"/>
    </location>
</feature>
<feature type="helix" evidence="9">
    <location>
        <begin position="183"/>
        <end position="190"/>
    </location>
</feature>
<feature type="helix" evidence="9">
    <location>
        <begin position="192"/>
        <end position="202"/>
    </location>
</feature>
<feature type="turn" evidence="9">
    <location>
        <begin position="203"/>
        <end position="205"/>
    </location>
</feature>
<feature type="strand" evidence="9">
    <location>
        <begin position="214"/>
        <end position="218"/>
    </location>
</feature>
<feature type="helix" evidence="9">
    <location>
        <begin position="222"/>
        <end position="233"/>
    </location>
</feature>
<feature type="strand" evidence="9">
    <location>
        <begin position="237"/>
        <end position="242"/>
    </location>
</feature>
<feature type="helix" evidence="9">
    <location>
        <begin position="246"/>
        <end position="255"/>
    </location>
</feature>
<feature type="strand" evidence="9">
    <location>
        <begin position="258"/>
        <end position="261"/>
    </location>
</feature>
<feature type="turn" evidence="9">
    <location>
        <begin position="263"/>
        <end position="265"/>
    </location>
</feature>
<feature type="helix" evidence="9">
    <location>
        <begin position="268"/>
        <end position="275"/>
    </location>
</feature>
<feature type="turn" evidence="9">
    <location>
        <begin position="276"/>
        <end position="278"/>
    </location>
</feature>
<feature type="strand" evidence="9">
    <location>
        <begin position="282"/>
        <end position="286"/>
    </location>
</feature>
<feature type="helix" evidence="9">
    <location>
        <begin position="291"/>
        <end position="304"/>
    </location>
</feature>
<feature type="strand" evidence="9">
    <location>
        <begin position="311"/>
        <end position="314"/>
    </location>
</feature>
<feature type="strand" evidence="9">
    <location>
        <begin position="322"/>
        <end position="324"/>
    </location>
</feature>
<feature type="helix" evidence="9">
    <location>
        <begin position="326"/>
        <end position="331"/>
    </location>
</feature>
<feature type="strand" evidence="9">
    <location>
        <begin position="335"/>
        <end position="338"/>
    </location>
</feature>
<feature type="helix" evidence="9">
    <location>
        <begin position="347"/>
        <end position="356"/>
    </location>
</feature>
<feature type="helix" evidence="9">
    <location>
        <begin position="361"/>
        <end position="364"/>
    </location>
</feature>
<feature type="strand" evidence="9">
    <location>
        <begin position="367"/>
        <end position="369"/>
    </location>
</feature>
<feature type="helix" evidence="9">
    <location>
        <begin position="371"/>
        <end position="373"/>
    </location>
</feature>
<feature type="helix" evidence="9">
    <location>
        <begin position="374"/>
        <end position="380"/>
    </location>
</feature>
<feature type="turn" evidence="9">
    <location>
        <begin position="381"/>
        <end position="383"/>
    </location>
</feature>
<feature type="strand" evidence="9">
    <location>
        <begin position="390"/>
        <end position="393"/>
    </location>
</feature>
<gene>
    <name evidence="3" type="primary">iolM</name>
    <name evidence="7" type="ordered locus">TM_0412</name>
</gene>
<dbReference type="EC" id="1.1.1.-" evidence="2"/>
<dbReference type="EMBL" id="AE000512">
    <property type="protein sequence ID" value="AAD35497.1"/>
    <property type="molecule type" value="Genomic_DNA"/>
</dbReference>
<dbReference type="PIR" id="B72381">
    <property type="entry name" value="B72381"/>
</dbReference>
<dbReference type="RefSeq" id="NP_228222.1">
    <property type="nucleotide sequence ID" value="NC_000853.1"/>
</dbReference>
<dbReference type="RefSeq" id="WP_004083260.1">
    <property type="nucleotide sequence ID" value="NC_000853.1"/>
</dbReference>
<dbReference type="PDB" id="3IP1">
    <property type="method" value="X-ray"/>
    <property type="resolution" value="2.09 A"/>
    <property type="chains" value="A/B/C/D=2-395"/>
</dbReference>
<dbReference type="PDBsum" id="3IP1"/>
<dbReference type="SMR" id="Q9WYP3"/>
<dbReference type="STRING" id="243274.TM_0412"/>
<dbReference type="PaxDb" id="243274-THEMA_02665"/>
<dbReference type="DNASU" id="897413"/>
<dbReference type="EnsemblBacteria" id="AAD35497">
    <property type="protein sequence ID" value="AAD35497"/>
    <property type="gene ID" value="TM_0412"/>
</dbReference>
<dbReference type="KEGG" id="tma:TM0412"/>
<dbReference type="KEGG" id="tmi:THEMA_02665"/>
<dbReference type="KEGG" id="tmm:Tmari_0409"/>
<dbReference type="KEGG" id="tmw:THMA_0418"/>
<dbReference type="PATRIC" id="fig|243274.17.peg.410"/>
<dbReference type="eggNOG" id="COG1063">
    <property type="taxonomic scope" value="Bacteria"/>
</dbReference>
<dbReference type="InParanoid" id="Q9WYP3"/>
<dbReference type="OrthoDB" id="9769198at2"/>
<dbReference type="BioCyc" id="MetaCyc:MONOMER-17949"/>
<dbReference type="UniPathway" id="UPA00914"/>
<dbReference type="EvolutionaryTrace" id="Q9WYP3"/>
<dbReference type="Proteomes" id="UP000008183">
    <property type="component" value="Chromosome"/>
</dbReference>
<dbReference type="GO" id="GO:0016491">
    <property type="term" value="F:oxidoreductase activity"/>
    <property type="evidence" value="ECO:0007669"/>
    <property type="project" value="UniProtKB-KW"/>
</dbReference>
<dbReference type="GO" id="GO:0008270">
    <property type="term" value="F:zinc ion binding"/>
    <property type="evidence" value="ECO:0007669"/>
    <property type="project" value="InterPro"/>
</dbReference>
<dbReference type="GO" id="GO:0006020">
    <property type="term" value="P:inositol metabolic process"/>
    <property type="evidence" value="ECO:0007669"/>
    <property type="project" value="UniProtKB-UniPathway"/>
</dbReference>
<dbReference type="CDD" id="cd08265">
    <property type="entry name" value="Zn_ADH3"/>
    <property type="match status" value="1"/>
</dbReference>
<dbReference type="Gene3D" id="3.90.180.10">
    <property type="entry name" value="Medium-chain alcohol dehydrogenases, catalytic domain"/>
    <property type="match status" value="1"/>
</dbReference>
<dbReference type="Gene3D" id="3.40.50.720">
    <property type="entry name" value="NAD(P)-binding Rossmann-like Domain"/>
    <property type="match status" value="1"/>
</dbReference>
<dbReference type="InterPro" id="IPR013149">
    <property type="entry name" value="ADH-like_C"/>
</dbReference>
<dbReference type="InterPro" id="IPR013154">
    <property type="entry name" value="ADH-like_N"/>
</dbReference>
<dbReference type="InterPro" id="IPR002328">
    <property type="entry name" value="ADH_Zn_CS"/>
</dbReference>
<dbReference type="InterPro" id="IPR011032">
    <property type="entry name" value="GroES-like_sf"/>
</dbReference>
<dbReference type="InterPro" id="IPR036291">
    <property type="entry name" value="NAD(P)-bd_dom_sf"/>
</dbReference>
<dbReference type="InterPro" id="IPR020843">
    <property type="entry name" value="PKS_ER"/>
</dbReference>
<dbReference type="InterPro" id="IPR053539">
    <property type="entry name" value="Scyllo-inosose_DH"/>
</dbReference>
<dbReference type="NCBIfam" id="NF041097">
    <property type="entry name" value="keto_inos_dh_IolM"/>
    <property type="match status" value="1"/>
</dbReference>
<dbReference type="PANTHER" id="PTHR43189:SF1">
    <property type="entry name" value="ZINC-TYPE ALCOHOL DEHYDROGENASE-LIKE PROTEIN C1198.01"/>
    <property type="match status" value="1"/>
</dbReference>
<dbReference type="PANTHER" id="PTHR43189">
    <property type="entry name" value="ZINC-TYPE ALCOHOL DEHYDROGENASE-LIKE PROTEIN C1198.01-RELATED"/>
    <property type="match status" value="1"/>
</dbReference>
<dbReference type="Pfam" id="PF08240">
    <property type="entry name" value="ADH_N"/>
    <property type="match status" value="1"/>
</dbReference>
<dbReference type="Pfam" id="PF00107">
    <property type="entry name" value="ADH_zinc_N"/>
    <property type="match status" value="1"/>
</dbReference>
<dbReference type="SMART" id="SM00829">
    <property type="entry name" value="PKS_ER"/>
    <property type="match status" value="1"/>
</dbReference>
<dbReference type="SUPFAM" id="SSF50129">
    <property type="entry name" value="GroES-like"/>
    <property type="match status" value="1"/>
</dbReference>
<dbReference type="SUPFAM" id="SSF51735">
    <property type="entry name" value="NAD(P)-binding Rossmann-fold domains"/>
    <property type="match status" value="1"/>
</dbReference>
<dbReference type="PROSITE" id="PS00059">
    <property type="entry name" value="ADH_ZINC"/>
    <property type="match status" value="1"/>
</dbReference>